<reference key="1">
    <citation type="journal article" date="2000" name="Nature">
        <title>Sequence and analysis of chromosome 1 of the plant Arabidopsis thaliana.</title>
        <authorList>
            <person name="Theologis A."/>
            <person name="Ecker J.R."/>
            <person name="Palm C.J."/>
            <person name="Federspiel N.A."/>
            <person name="Kaul S."/>
            <person name="White O."/>
            <person name="Alonso J."/>
            <person name="Altafi H."/>
            <person name="Araujo R."/>
            <person name="Bowman C.L."/>
            <person name="Brooks S.Y."/>
            <person name="Buehler E."/>
            <person name="Chan A."/>
            <person name="Chao Q."/>
            <person name="Chen H."/>
            <person name="Cheuk R.F."/>
            <person name="Chin C.W."/>
            <person name="Chung M.K."/>
            <person name="Conn L."/>
            <person name="Conway A.B."/>
            <person name="Conway A.R."/>
            <person name="Creasy T.H."/>
            <person name="Dewar K."/>
            <person name="Dunn P."/>
            <person name="Etgu P."/>
            <person name="Feldblyum T.V."/>
            <person name="Feng J.-D."/>
            <person name="Fong B."/>
            <person name="Fujii C.Y."/>
            <person name="Gill J.E."/>
            <person name="Goldsmith A.D."/>
            <person name="Haas B."/>
            <person name="Hansen N.F."/>
            <person name="Hughes B."/>
            <person name="Huizar L."/>
            <person name="Hunter J.L."/>
            <person name="Jenkins J."/>
            <person name="Johnson-Hopson C."/>
            <person name="Khan S."/>
            <person name="Khaykin E."/>
            <person name="Kim C.J."/>
            <person name="Koo H.L."/>
            <person name="Kremenetskaia I."/>
            <person name="Kurtz D.B."/>
            <person name="Kwan A."/>
            <person name="Lam B."/>
            <person name="Langin-Hooper S."/>
            <person name="Lee A."/>
            <person name="Lee J.M."/>
            <person name="Lenz C.A."/>
            <person name="Li J.H."/>
            <person name="Li Y.-P."/>
            <person name="Lin X."/>
            <person name="Liu S.X."/>
            <person name="Liu Z.A."/>
            <person name="Luros J.S."/>
            <person name="Maiti R."/>
            <person name="Marziali A."/>
            <person name="Militscher J."/>
            <person name="Miranda M."/>
            <person name="Nguyen M."/>
            <person name="Nierman W.C."/>
            <person name="Osborne B.I."/>
            <person name="Pai G."/>
            <person name="Peterson J."/>
            <person name="Pham P.K."/>
            <person name="Rizzo M."/>
            <person name="Rooney T."/>
            <person name="Rowley D."/>
            <person name="Sakano H."/>
            <person name="Salzberg S.L."/>
            <person name="Schwartz J.R."/>
            <person name="Shinn P."/>
            <person name="Southwick A.M."/>
            <person name="Sun H."/>
            <person name="Tallon L.J."/>
            <person name="Tambunga G."/>
            <person name="Toriumi M.J."/>
            <person name="Town C.D."/>
            <person name="Utterback T."/>
            <person name="Van Aken S."/>
            <person name="Vaysberg M."/>
            <person name="Vysotskaia V.S."/>
            <person name="Walker M."/>
            <person name="Wu D."/>
            <person name="Yu G."/>
            <person name="Fraser C.M."/>
            <person name="Venter J.C."/>
            <person name="Davis R.W."/>
        </authorList>
    </citation>
    <scope>NUCLEOTIDE SEQUENCE [LARGE SCALE GENOMIC DNA]</scope>
    <source>
        <strain>cv. Columbia</strain>
    </source>
</reference>
<reference key="2">
    <citation type="journal article" date="2017" name="Plant J.">
        <title>Araport11: a complete reannotation of the Arabidopsis thaliana reference genome.</title>
        <authorList>
            <person name="Cheng C.Y."/>
            <person name="Krishnakumar V."/>
            <person name="Chan A.P."/>
            <person name="Thibaud-Nissen F."/>
            <person name="Schobel S."/>
            <person name="Town C.D."/>
        </authorList>
    </citation>
    <scope>GENOME REANNOTATION</scope>
    <source>
        <strain>cv. Columbia</strain>
    </source>
</reference>
<reference key="3">
    <citation type="journal article" date="2003" name="Science">
        <title>Empirical analysis of transcriptional activity in the Arabidopsis genome.</title>
        <authorList>
            <person name="Yamada K."/>
            <person name="Lim J."/>
            <person name="Dale J.M."/>
            <person name="Chen H."/>
            <person name="Shinn P."/>
            <person name="Palm C.J."/>
            <person name="Southwick A.M."/>
            <person name="Wu H.C."/>
            <person name="Kim C.J."/>
            <person name="Nguyen M."/>
            <person name="Pham P.K."/>
            <person name="Cheuk R.F."/>
            <person name="Karlin-Newmann G."/>
            <person name="Liu S.X."/>
            <person name="Lam B."/>
            <person name="Sakano H."/>
            <person name="Wu T."/>
            <person name="Yu G."/>
            <person name="Miranda M."/>
            <person name="Quach H.L."/>
            <person name="Tripp M."/>
            <person name="Chang C.H."/>
            <person name="Lee J.M."/>
            <person name="Toriumi M.J."/>
            <person name="Chan M.M."/>
            <person name="Tang C.C."/>
            <person name="Onodera C.S."/>
            <person name="Deng J.M."/>
            <person name="Akiyama K."/>
            <person name="Ansari Y."/>
            <person name="Arakawa T."/>
            <person name="Banh J."/>
            <person name="Banno F."/>
            <person name="Bowser L."/>
            <person name="Brooks S.Y."/>
            <person name="Carninci P."/>
            <person name="Chao Q."/>
            <person name="Choy N."/>
            <person name="Enju A."/>
            <person name="Goldsmith A.D."/>
            <person name="Gurjal M."/>
            <person name="Hansen N.F."/>
            <person name="Hayashizaki Y."/>
            <person name="Johnson-Hopson C."/>
            <person name="Hsuan V.W."/>
            <person name="Iida K."/>
            <person name="Karnes M."/>
            <person name="Khan S."/>
            <person name="Koesema E."/>
            <person name="Ishida J."/>
            <person name="Jiang P.X."/>
            <person name="Jones T."/>
            <person name="Kawai J."/>
            <person name="Kamiya A."/>
            <person name="Meyers C."/>
            <person name="Nakajima M."/>
            <person name="Narusaka M."/>
            <person name="Seki M."/>
            <person name="Sakurai T."/>
            <person name="Satou M."/>
            <person name="Tamse R."/>
            <person name="Vaysberg M."/>
            <person name="Wallender E.K."/>
            <person name="Wong C."/>
            <person name="Yamamura Y."/>
            <person name="Yuan S."/>
            <person name="Shinozaki K."/>
            <person name="Davis R.W."/>
            <person name="Theologis A."/>
            <person name="Ecker J.R."/>
        </authorList>
    </citation>
    <scope>NUCLEOTIDE SEQUENCE [LARGE SCALE MRNA]</scope>
    <source>
        <strain>cv. Columbia</strain>
    </source>
</reference>
<reference key="4">
    <citation type="journal article" date="2009" name="DNA Res.">
        <title>Analysis of multiple occurrences of alternative splicing events in Arabidopsis thaliana using novel sequenced full-length cDNAs.</title>
        <authorList>
            <person name="Iida K."/>
            <person name="Fukami-Kobayashi K."/>
            <person name="Toyoda A."/>
            <person name="Sakaki Y."/>
            <person name="Kobayashi M."/>
            <person name="Seki M."/>
            <person name="Shinozaki K."/>
        </authorList>
    </citation>
    <scope>NUCLEOTIDE SEQUENCE [LARGE SCALE MRNA] OF 231-1026</scope>
    <source>
        <strain>cv. Columbia</strain>
    </source>
</reference>
<gene>
    <name type="ordered locus">At1g17220</name>
    <name type="ORF">F20D23.8</name>
</gene>
<dbReference type="EMBL" id="AC007651">
    <property type="protein sequence ID" value="AAD50011.1"/>
    <property type="status" value="ALT_INIT"/>
    <property type="molecule type" value="Genomic_DNA"/>
</dbReference>
<dbReference type="EMBL" id="CP002684">
    <property type="protein sequence ID" value="AEE29560.1"/>
    <property type="molecule type" value="Genomic_DNA"/>
</dbReference>
<dbReference type="EMBL" id="AF367343">
    <property type="protein sequence ID" value="AAK32930.1"/>
    <property type="molecule type" value="mRNA"/>
</dbReference>
<dbReference type="EMBL" id="BT001007">
    <property type="protein sequence ID" value="AAN46761.1"/>
    <property type="molecule type" value="mRNA"/>
</dbReference>
<dbReference type="EMBL" id="AK317746">
    <property type="protein sequence ID" value="BAH20402.1"/>
    <property type="molecule type" value="mRNA"/>
</dbReference>
<dbReference type="PIR" id="D86308">
    <property type="entry name" value="D86308"/>
</dbReference>
<dbReference type="RefSeq" id="NP_173165.1">
    <property type="nucleotide sequence ID" value="NM_101583.4"/>
</dbReference>
<dbReference type="SMR" id="Q9SHI1"/>
<dbReference type="FunCoup" id="Q9SHI1">
    <property type="interactions" value="1110"/>
</dbReference>
<dbReference type="STRING" id="3702.Q9SHI1"/>
<dbReference type="iPTMnet" id="Q9SHI1"/>
<dbReference type="PaxDb" id="3702-AT1G17220.1"/>
<dbReference type="ProteomicsDB" id="228846"/>
<dbReference type="EnsemblPlants" id="AT1G17220.1">
    <property type="protein sequence ID" value="AT1G17220.1"/>
    <property type="gene ID" value="AT1G17220"/>
</dbReference>
<dbReference type="GeneID" id="838293"/>
<dbReference type="Gramene" id="AT1G17220.1">
    <property type="protein sequence ID" value="AT1G17220.1"/>
    <property type="gene ID" value="AT1G17220"/>
</dbReference>
<dbReference type="KEGG" id="ath:AT1G17220"/>
<dbReference type="Araport" id="AT1G17220"/>
<dbReference type="TAIR" id="AT1G17220">
    <property type="gene designation" value="FUG1"/>
</dbReference>
<dbReference type="eggNOG" id="KOG1145">
    <property type="taxonomic scope" value="Eukaryota"/>
</dbReference>
<dbReference type="HOGENOM" id="CLU_006301_7_1_1"/>
<dbReference type="InParanoid" id="Q9SHI1"/>
<dbReference type="OMA" id="LECYLLV"/>
<dbReference type="PRO" id="PR:Q9SHI1"/>
<dbReference type="Proteomes" id="UP000006548">
    <property type="component" value="Chromosome 1"/>
</dbReference>
<dbReference type="ExpressionAtlas" id="Q9SHI1">
    <property type="expression patterns" value="baseline and differential"/>
</dbReference>
<dbReference type="GO" id="GO:0009507">
    <property type="term" value="C:chloroplast"/>
    <property type="evidence" value="ECO:0000314"/>
    <property type="project" value="TAIR"/>
</dbReference>
<dbReference type="GO" id="GO:0009941">
    <property type="term" value="C:chloroplast envelope"/>
    <property type="evidence" value="ECO:0007005"/>
    <property type="project" value="TAIR"/>
</dbReference>
<dbReference type="GO" id="GO:0009570">
    <property type="term" value="C:chloroplast stroma"/>
    <property type="evidence" value="ECO:0007005"/>
    <property type="project" value="TAIR"/>
</dbReference>
<dbReference type="GO" id="GO:0005634">
    <property type="term" value="C:nucleus"/>
    <property type="evidence" value="ECO:0007005"/>
    <property type="project" value="TAIR"/>
</dbReference>
<dbReference type="GO" id="GO:0005525">
    <property type="term" value="F:GTP binding"/>
    <property type="evidence" value="ECO:0007669"/>
    <property type="project" value="UniProtKB-KW"/>
</dbReference>
<dbReference type="GO" id="GO:0003924">
    <property type="term" value="F:GTPase activity"/>
    <property type="evidence" value="ECO:0007669"/>
    <property type="project" value="InterPro"/>
</dbReference>
<dbReference type="GO" id="GO:0003729">
    <property type="term" value="F:mRNA binding"/>
    <property type="evidence" value="ECO:0000314"/>
    <property type="project" value="TAIR"/>
</dbReference>
<dbReference type="GO" id="GO:0003743">
    <property type="term" value="F:translation initiation factor activity"/>
    <property type="evidence" value="ECO:0007669"/>
    <property type="project" value="UniProtKB-KW"/>
</dbReference>
<dbReference type="CDD" id="cd01887">
    <property type="entry name" value="IF2_eIF5B"/>
    <property type="match status" value="1"/>
</dbReference>
<dbReference type="CDD" id="cd03702">
    <property type="entry name" value="IF2_mtIF2_II"/>
    <property type="match status" value="1"/>
</dbReference>
<dbReference type="CDD" id="cd03692">
    <property type="entry name" value="mtIF2_IVc"/>
    <property type="match status" value="1"/>
</dbReference>
<dbReference type="FunFam" id="2.40.30.10:FF:000008">
    <property type="entry name" value="Translation initiation factor IF-2"/>
    <property type="match status" value="1"/>
</dbReference>
<dbReference type="FunFam" id="2.40.30.10:FF:000054">
    <property type="entry name" value="Translation initiation factor IF-2"/>
    <property type="match status" value="1"/>
</dbReference>
<dbReference type="FunFam" id="3.40.50.10050:FF:000001">
    <property type="entry name" value="Translation initiation factor IF-2"/>
    <property type="match status" value="1"/>
</dbReference>
<dbReference type="FunFam" id="3.40.50.300:FF:000019">
    <property type="entry name" value="Translation initiation factor IF-2"/>
    <property type="match status" value="1"/>
</dbReference>
<dbReference type="Gene3D" id="3.40.50.300">
    <property type="entry name" value="P-loop containing nucleotide triphosphate hydrolases"/>
    <property type="match status" value="1"/>
</dbReference>
<dbReference type="Gene3D" id="2.40.30.10">
    <property type="entry name" value="Translation factors"/>
    <property type="match status" value="2"/>
</dbReference>
<dbReference type="Gene3D" id="3.40.50.10050">
    <property type="entry name" value="Translation initiation factor IF- 2, domain 3"/>
    <property type="match status" value="1"/>
</dbReference>
<dbReference type="HAMAP" id="MF_00100_B">
    <property type="entry name" value="IF_2_B"/>
    <property type="match status" value="1"/>
</dbReference>
<dbReference type="InterPro" id="IPR053905">
    <property type="entry name" value="EF-G-like_DII"/>
</dbReference>
<dbReference type="InterPro" id="IPR044145">
    <property type="entry name" value="IF2_II"/>
</dbReference>
<dbReference type="InterPro" id="IPR006847">
    <property type="entry name" value="IF2_N"/>
</dbReference>
<dbReference type="InterPro" id="IPR027417">
    <property type="entry name" value="P-loop_NTPase"/>
</dbReference>
<dbReference type="InterPro" id="IPR005225">
    <property type="entry name" value="Small_GTP-bd"/>
</dbReference>
<dbReference type="InterPro" id="IPR000795">
    <property type="entry name" value="T_Tr_GTP-bd_dom"/>
</dbReference>
<dbReference type="InterPro" id="IPR000178">
    <property type="entry name" value="TF_IF2_bacterial-like"/>
</dbReference>
<dbReference type="InterPro" id="IPR015760">
    <property type="entry name" value="TIF_IF2"/>
</dbReference>
<dbReference type="InterPro" id="IPR023115">
    <property type="entry name" value="TIF_IF2_dom3"/>
</dbReference>
<dbReference type="InterPro" id="IPR036925">
    <property type="entry name" value="TIF_IF2_dom3_sf"/>
</dbReference>
<dbReference type="InterPro" id="IPR009000">
    <property type="entry name" value="Transl_B-barrel_sf"/>
</dbReference>
<dbReference type="NCBIfam" id="TIGR00487">
    <property type="entry name" value="IF-2"/>
    <property type="match status" value="1"/>
</dbReference>
<dbReference type="NCBIfam" id="TIGR00231">
    <property type="entry name" value="small_GTP"/>
    <property type="match status" value="1"/>
</dbReference>
<dbReference type="PANTHER" id="PTHR43381:SF5">
    <property type="entry name" value="TR-TYPE G DOMAIN-CONTAINING PROTEIN"/>
    <property type="match status" value="1"/>
</dbReference>
<dbReference type="PANTHER" id="PTHR43381">
    <property type="entry name" value="TRANSLATION INITIATION FACTOR IF-2-RELATED"/>
    <property type="match status" value="1"/>
</dbReference>
<dbReference type="Pfam" id="PF22042">
    <property type="entry name" value="EF-G_D2"/>
    <property type="match status" value="1"/>
</dbReference>
<dbReference type="Pfam" id="PF00009">
    <property type="entry name" value="GTP_EFTU"/>
    <property type="match status" value="1"/>
</dbReference>
<dbReference type="Pfam" id="PF11987">
    <property type="entry name" value="IF-2"/>
    <property type="match status" value="1"/>
</dbReference>
<dbReference type="Pfam" id="PF04760">
    <property type="entry name" value="IF2_N"/>
    <property type="match status" value="1"/>
</dbReference>
<dbReference type="PRINTS" id="PR00315">
    <property type="entry name" value="ELONGATNFCT"/>
</dbReference>
<dbReference type="SUPFAM" id="SSF52156">
    <property type="entry name" value="Initiation factor IF2/eIF5b, domain 3"/>
    <property type="match status" value="1"/>
</dbReference>
<dbReference type="SUPFAM" id="SSF52540">
    <property type="entry name" value="P-loop containing nucleoside triphosphate hydrolases"/>
    <property type="match status" value="1"/>
</dbReference>
<dbReference type="SUPFAM" id="SSF50447">
    <property type="entry name" value="Translation proteins"/>
    <property type="match status" value="2"/>
</dbReference>
<dbReference type="PROSITE" id="PS51722">
    <property type="entry name" value="G_TR_2"/>
    <property type="match status" value="1"/>
</dbReference>
<dbReference type="PROSITE" id="PS01176">
    <property type="entry name" value="IF2"/>
    <property type="match status" value="1"/>
</dbReference>
<organism>
    <name type="scientific">Arabidopsis thaliana</name>
    <name type="common">Mouse-ear cress</name>
    <dbReference type="NCBI Taxonomy" id="3702"/>
    <lineage>
        <taxon>Eukaryota</taxon>
        <taxon>Viridiplantae</taxon>
        <taxon>Streptophyta</taxon>
        <taxon>Embryophyta</taxon>
        <taxon>Tracheophyta</taxon>
        <taxon>Spermatophyta</taxon>
        <taxon>Magnoliopsida</taxon>
        <taxon>eudicotyledons</taxon>
        <taxon>Gunneridae</taxon>
        <taxon>Pentapetalae</taxon>
        <taxon>rosids</taxon>
        <taxon>malvids</taxon>
        <taxon>Brassicales</taxon>
        <taxon>Brassicaceae</taxon>
        <taxon>Camelineae</taxon>
        <taxon>Arabidopsis</taxon>
    </lineage>
</organism>
<name>IF2C_ARATH</name>
<comment type="function">
    <text evidence="1">One of the essential components for the initiation of protein synthesis. Protects formylmethionyl-tRNA from spontaneous hydrolysis and promotes its binding to the 30S ribosomal subunits. Also involved in the hydrolysis of GTP during the formation of the 70S ribosomal complex (By similarity).</text>
</comment>
<comment type="subcellular location">
    <subcellularLocation>
        <location>Plastid</location>
        <location>Chloroplast</location>
    </subcellularLocation>
</comment>
<comment type="similarity">
    <text evidence="4">Belongs to the TRAFAC class translation factor GTPase superfamily. Classic translation factor GTPase family. IF-2 subfamily.</text>
</comment>
<comment type="sequence caution" evidence="4">
    <conflict type="erroneous initiation">
        <sequence resource="EMBL-CDS" id="AAD50011"/>
    </conflict>
    <text>Truncated N-terminus.</text>
</comment>
<protein>
    <recommendedName>
        <fullName>Translation initiation factor IF-2, chloroplastic</fullName>
    </recommendedName>
</protein>
<proteinExistence type="evidence at transcript level"/>
<evidence type="ECO:0000250" key="1"/>
<evidence type="ECO:0000255" key="2"/>
<evidence type="ECO:0000256" key="3">
    <source>
        <dbReference type="SAM" id="MobiDB-lite"/>
    </source>
</evidence>
<evidence type="ECO:0000305" key="4"/>
<keyword id="KW-0150">Chloroplast</keyword>
<keyword id="KW-0342">GTP-binding</keyword>
<keyword id="KW-0396">Initiation factor</keyword>
<keyword id="KW-0547">Nucleotide-binding</keyword>
<keyword id="KW-0934">Plastid</keyword>
<keyword id="KW-0648">Protein biosynthesis</keyword>
<keyword id="KW-1185">Reference proteome</keyword>
<keyword id="KW-0809">Transit peptide</keyword>
<feature type="transit peptide" description="Chloroplast" evidence="2">
    <location>
        <begin position="1"/>
        <end position="63"/>
    </location>
</feature>
<feature type="chain" id="PRO_0000014477" description="Translation initiation factor IF-2, chloroplastic">
    <location>
        <begin position="64"/>
        <end position="1026"/>
    </location>
</feature>
<feature type="domain" description="tr-type G">
    <location>
        <begin position="499"/>
        <end position="672"/>
    </location>
</feature>
<feature type="region of interest" description="Disordered" evidence="3">
    <location>
        <begin position="158"/>
        <end position="208"/>
    </location>
</feature>
<feature type="region of interest" description="Disordered" evidence="3">
    <location>
        <begin position="230"/>
        <end position="284"/>
    </location>
</feature>
<feature type="region of interest" description="Disordered" evidence="3">
    <location>
        <begin position="300"/>
        <end position="393"/>
    </location>
</feature>
<feature type="region of interest" description="G1" evidence="1">
    <location>
        <begin position="508"/>
        <end position="515"/>
    </location>
</feature>
<feature type="region of interest" description="G2" evidence="1">
    <location>
        <begin position="533"/>
        <end position="537"/>
    </location>
</feature>
<feature type="region of interest" description="G3" evidence="1">
    <location>
        <begin position="558"/>
        <end position="561"/>
    </location>
</feature>
<feature type="region of interest" description="G4" evidence="1">
    <location>
        <begin position="612"/>
        <end position="615"/>
    </location>
</feature>
<feature type="region of interest" description="G5" evidence="1">
    <location>
        <begin position="648"/>
        <end position="650"/>
    </location>
</feature>
<feature type="compositionally biased region" description="Basic and acidic residues" evidence="3">
    <location>
        <begin position="158"/>
        <end position="173"/>
    </location>
</feature>
<feature type="compositionally biased region" description="Polar residues" evidence="3">
    <location>
        <begin position="178"/>
        <end position="194"/>
    </location>
</feature>
<feature type="compositionally biased region" description="Pro residues" evidence="3">
    <location>
        <begin position="254"/>
        <end position="269"/>
    </location>
</feature>
<feature type="compositionally biased region" description="Basic and acidic residues" evidence="3">
    <location>
        <begin position="306"/>
        <end position="317"/>
    </location>
</feature>
<feature type="compositionally biased region" description="Basic residues" evidence="3">
    <location>
        <begin position="384"/>
        <end position="393"/>
    </location>
</feature>
<feature type="binding site" evidence="1">
    <location>
        <begin position="508"/>
        <end position="515"/>
    </location>
    <ligand>
        <name>GTP</name>
        <dbReference type="ChEBI" id="CHEBI:37565"/>
    </ligand>
</feature>
<feature type="binding site" evidence="1">
    <location>
        <begin position="558"/>
        <end position="562"/>
    </location>
    <ligand>
        <name>GTP</name>
        <dbReference type="ChEBI" id="CHEBI:37565"/>
    </ligand>
</feature>
<feature type="binding site" evidence="1">
    <location>
        <begin position="612"/>
        <end position="615"/>
    </location>
    <ligand>
        <name>GTP</name>
        <dbReference type="ChEBI" id="CHEBI:37565"/>
    </ligand>
</feature>
<feature type="sequence conflict" description="In Ref. 3; AAN46761/AAK32930." evidence="4" ref="3">
    <original>R</original>
    <variation>G</variation>
    <location>
        <position position="779"/>
    </location>
</feature>
<sequence length="1026" mass="109747">MPSMLVLVGTMPSLASLVSLGGACASVSGTSSSDASYALVKRVSLSRRSVKGTKKWLCRYSVSSSTTTTTADFIADQNNNSVSIDSNSFRGSKDGDDSEVVLKQTPKPVLKPPVARVERGLGVNTAPWSKDLSNGGKFDGEEERNKVIESLGEVLDKAEKLEIPKPGNKEGGEAVKPSQPSANSSNSRNGSYANASDGGTRKTKTMKSVWRKGDAVAAVQKVVKESPKIFNRGVQTEPRTREEGEVNAKAGTPLAPPQPPFRPQPPVRPQPMLQGKPMVAPPVKKSPILKDLGMAAKPLVSEEVDSSVKSKERKPILVDKFASKKKGVDPAASQAVLAPTKPGKGPPSNKFRVEHRNKKNASASPRRRIVAEDDGDDDASISRSGRKGRKWSKASRKAVRLQAAKDAAPVKAEILEVEEEGMSIEDLAYNLAIGEGDILGYLYSKGIRPDGVHTLDREMVKMICRDYDVEVLDADSVKVEEMAKKRQTFDEEDLDKLEDRPPVITIMGHVDHGKTTLLDYIRKSKVAASEAGGITQGIGAYKVSVPVDGKLQSCVFLDTPGHEAFGAMRARGARVTDIAIIVVAADDGIRPQTNEAIAHAKAAAVPIVIAINKIDKEGASPDRVMQELSSIGLMPEDWGGDVPMVQISALKGENVDDLLETVMLVAELQELKANPHRNAKGIVIEAGLDKAKGPFATFIVQKGTLKRGDVVVCGEAFGKVRALFDHSGERVDEAGPSIPVQVIGLNNVPIAGDEFEIVSSLDVAREMAEARAVSLRDERISAKAGDGKVTLSSLASAVSAKKMSGLDLHQLNIILKVDVQGSIEAVRQALQVLPQENVTLKFLLQATGDVSNSDVDLASASEAIVFGFNVKASGSVKKAAENKGVEIRLYRVIYELIDDVRNAMEGLLESVEEQIPIGSAEVRATFSSGSGRVAGCMVNEGKFVKDCGIRVVRKGKTVHVGVLDSLKRVKENVKEVSAGLECGIGMDDYDDWIEGDIIEAFNAVQKRRTLEEASASMSAAIEEAGV</sequence>
<accession>Q9SHI1</accession>
<accession>B9DI35</accession>
<accession>Q9ASQ3</accession>